<sequence>MRHGCRVPELGRPADQRKALLRALTTQLIRHGQVKTTKARAKAVRSEVDRMITLAKDGSLAARRRALGYMYDKDLVHALFAQAKDRYGDRQGGYSRVVRTVRRRGDNAEMAIIELV</sequence>
<organism>
    <name type="scientific">Picosynechococcus sp. (strain ATCC 27264 / PCC 7002 / PR-6)</name>
    <name type="common">Agmenellum quadruplicatum</name>
    <dbReference type="NCBI Taxonomy" id="32049"/>
    <lineage>
        <taxon>Bacteria</taxon>
        <taxon>Bacillati</taxon>
        <taxon>Cyanobacteriota</taxon>
        <taxon>Cyanophyceae</taxon>
        <taxon>Oscillatoriophycideae</taxon>
        <taxon>Chroococcales</taxon>
        <taxon>Geminocystaceae</taxon>
        <taxon>Picosynechococcus</taxon>
    </lineage>
</organism>
<reference key="1">
    <citation type="submission" date="2008-02" db="EMBL/GenBank/DDBJ databases">
        <title>Complete sequence of Synechococcus sp. PCC 7002.</title>
        <authorList>
            <person name="Li T."/>
            <person name="Zhao J."/>
            <person name="Zhao C."/>
            <person name="Liu Z."/>
            <person name="Zhao F."/>
            <person name="Marquardt J."/>
            <person name="Nomura C.T."/>
            <person name="Persson S."/>
            <person name="Detter J.C."/>
            <person name="Richardson P.M."/>
            <person name="Lanz C."/>
            <person name="Schuster S.C."/>
            <person name="Wang J."/>
            <person name="Li S."/>
            <person name="Huang X."/>
            <person name="Cai T."/>
            <person name="Yu Z."/>
            <person name="Luo J."/>
            <person name="Zhao J."/>
            <person name="Bryant D.A."/>
        </authorList>
    </citation>
    <scope>NUCLEOTIDE SEQUENCE [LARGE SCALE GENOMIC DNA]</scope>
    <source>
        <strain>ATCC 27264 / PCC 7002 / PR-6</strain>
    </source>
</reference>
<feature type="chain" id="PRO_1000144495" description="Large ribosomal subunit protein bL17">
    <location>
        <begin position="1"/>
        <end position="116"/>
    </location>
</feature>
<comment type="subunit">
    <text evidence="1">Part of the 50S ribosomal subunit. Contacts protein L32.</text>
</comment>
<comment type="similarity">
    <text evidence="1">Belongs to the bacterial ribosomal protein bL17 family.</text>
</comment>
<protein>
    <recommendedName>
        <fullName evidence="1">Large ribosomal subunit protein bL17</fullName>
    </recommendedName>
    <alternativeName>
        <fullName evidence="2">50S ribosomal protein L17</fullName>
    </alternativeName>
</protein>
<gene>
    <name evidence="1" type="primary">rplQ</name>
    <name evidence="1" type="synonym">rpl17</name>
    <name type="ordered locus">SYNPCC7002_A1041</name>
</gene>
<dbReference type="EMBL" id="CP000951">
    <property type="protein sequence ID" value="ACA99043.1"/>
    <property type="molecule type" value="Genomic_DNA"/>
</dbReference>
<dbReference type="RefSeq" id="WP_012306667.1">
    <property type="nucleotide sequence ID" value="NZ_JAHHPU010000001.1"/>
</dbReference>
<dbReference type="SMR" id="B1XJI3"/>
<dbReference type="STRING" id="32049.SYNPCC7002_A1041"/>
<dbReference type="KEGG" id="syp:SYNPCC7002_A1041"/>
<dbReference type="eggNOG" id="COG0203">
    <property type="taxonomic scope" value="Bacteria"/>
</dbReference>
<dbReference type="HOGENOM" id="CLU_074407_2_2_3"/>
<dbReference type="Proteomes" id="UP000001688">
    <property type="component" value="Chromosome"/>
</dbReference>
<dbReference type="GO" id="GO:0022625">
    <property type="term" value="C:cytosolic large ribosomal subunit"/>
    <property type="evidence" value="ECO:0007669"/>
    <property type="project" value="TreeGrafter"/>
</dbReference>
<dbReference type="GO" id="GO:0003735">
    <property type="term" value="F:structural constituent of ribosome"/>
    <property type="evidence" value="ECO:0007669"/>
    <property type="project" value="InterPro"/>
</dbReference>
<dbReference type="GO" id="GO:0006412">
    <property type="term" value="P:translation"/>
    <property type="evidence" value="ECO:0007669"/>
    <property type="project" value="UniProtKB-UniRule"/>
</dbReference>
<dbReference type="FunFam" id="3.90.1030.10:FF:000001">
    <property type="entry name" value="50S ribosomal protein L17"/>
    <property type="match status" value="1"/>
</dbReference>
<dbReference type="Gene3D" id="3.90.1030.10">
    <property type="entry name" value="Ribosomal protein L17"/>
    <property type="match status" value="1"/>
</dbReference>
<dbReference type="HAMAP" id="MF_01368">
    <property type="entry name" value="Ribosomal_bL17"/>
    <property type="match status" value="1"/>
</dbReference>
<dbReference type="InterPro" id="IPR000456">
    <property type="entry name" value="Ribosomal_bL17"/>
</dbReference>
<dbReference type="InterPro" id="IPR036373">
    <property type="entry name" value="Ribosomal_bL17_sf"/>
</dbReference>
<dbReference type="NCBIfam" id="TIGR00059">
    <property type="entry name" value="L17"/>
    <property type="match status" value="1"/>
</dbReference>
<dbReference type="PANTHER" id="PTHR14413:SF16">
    <property type="entry name" value="LARGE RIBOSOMAL SUBUNIT PROTEIN BL17M"/>
    <property type="match status" value="1"/>
</dbReference>
<dbReference type="PANTHER" id="PTHR14413">
    <property type="entry name" value="RIBOSOMAL PROTEIN L17"/>
    <property type="match status" value="1"/>
</dbReference>
<dbReference type="Pfam" id="PF01196">
    <property type="entry name" value="Ribosomal_L17"/>
    <property type="match status" value="1"/>
</dbReference>
<dbReference type="SUPFAM" id="SSF64263">
    <property type="entry name" value="Prokaryotic ribosomal protein L17"/>
    <property type="match status" value="1"/>
</dbReference>
<proteinExistence type="inferred from homology"/>
<accession>B1XJI3</accession>
<keyword id="KW-1185">Reference proteome</keyword>
<keyword id="KW-0687">Ribonucleoprotein</keyword>
<keyword id="KW-0689">Ribosomal protein</keyword>
<evidence type="ECO:0000255" key="1">
    <source>
        <dbReference type="HAMAP-Rule" id="MF_01368"/>
    </source>
</evidence>
<evidence type="ECO:0000305" key="2"/>
<name>RL17_PICP2</name>